<name>YHAI_BACSU</name>
<keyword id="KW-0002">3D-structure</keyword>
<keyword id="KW-1185">Reference proteome</keyword>
<accession>O07517</accession>
<organism>
    <name type="scientific">Bacillus subtilis (strain 168)</name>
    <dbReference type="NCBI Taxonomy" id="224308"/>
    <lineage>
        <taxon>Bacteria</taxon>
        <taxon>Bacillati</taxon>
        <taxon>Bacillota</taxon>
        <taxon>Bacilli</taxon>
        <taxon>Bacillales</taxon>
        <taxon>Bacillaceae</taxon>
        <taxon>Bacillus</taxon>
    </lineage>
</organism>
<sequence length="113" mass="13306">MDSMDHRIERLEYYIQLLVKTVDMDRYPFYALLIDKGLSKEEGEAVMRICDELSEELATQKAQGFVTFDKLLALFAGQLNEKLDVHETIFALYEQGLYQELMEVFIDIMKHFD</sequence>
<gene>
    <name type="primary">yhaI</name>
    <name type="ordered locus">BSU09980</name>
</gene>
<evidence type="ECO:0007829" key="1">
    <source>
        <dbReference type="PDB" id="1SED"/>
    </source>
</evidence>
<dbReference type="EMBL" id="Y14077">
    <property type="protein sequence ID" value="CAA74415.1"/>
    <property type="molecule type" value="Genomic_DNA"/>
</dbReference>
<dbReference type="EMBL" id="AL009126">
    <property type="protein sequence ID" value="CAB12838.1"/>
    <property type="molecule type" value="Genomic_DNA"/>
</dbReference>
<dbReference type="PIR" id="C69818">
    <property type="entry name" value="C69818"/>
</dbReference>
<dbReference type="RefSeq" id="NP_388879.1">
    <property type="nucleotide sequence ID" value="NC_000964.3"/>
</dbReference>
<dbReference type="RefSeq" id="WP_009966921.1">
    <property type="nucleotide sequence ID" value="NZ_OZ025638.1"/>
</dbReference>
<dbReference type="PDB" id="1SED">
    <property type="method" value="X-ray"/>
    <property type="resolution" value="2.10 A"/>
    <property type="chains" value="A/B/C=1-113"/>
</dbReference>
<dbReference type="PDBsum" id="1SED"/>
<dbReference type="SMR" id="O07517"/>
<dbReference type="FunCoup" id="O07517">
    <property type="interactions" value="66"/>
</dbReference>
<dbReference type="IntAct" id="O07517">
    <property type="interactions" value="1"/>
</dbReference>
<dbReference type="STRING" id="224308.BSU09980"/>
<dbReference type="PaxDb" id="224308-BSU09980"/>
<dbReference type="EnsemblBacteria" id="CAB12838">
    <property type="protein sequence ID" value="CAB12838"/>
    <property type="gene ID" value="BSU_09980"/>
</dbReference>
<dbReference type="GeneID" id="939295"/>
<dbReference type="KEGG" id="bsu:BSU09980"/>
<dbReference type="PATRIC" id="fig|224308.179.peg.1073"/>
<dbReference type="eggNOG" id="ENOG5032TRG">
    <property type="taxonomic scope" value="Bacteria"/>
</dbReference>
<dbReference type="InParanoid" id="O07517"/>
<dbReference type="OrthoDB" id="2353223at2"/>
<dbReference type="BioCyc" id="BSUB:BSU09980-MONOMER"/>
<dbReference type="EvolutionaryTrace" id="O07517"/>
<dbReference type="Proteomes" id="UP000001570">
    <property type="component" value="Chromosome"/>
</dbReference>
<dbReference type="Gene3D" id="1.10.3750.10">
    <property type="entry name" value="YhaI-like"/>
    <property type="match status" value="1"/>
</dbReference>
<dbReference type="InterPro" id="IPR015058">
    <property type="entry name" value="DUF1878"/>
</dbReference>
<dbReference type="InterPro" id="IPR035945">
    <property type="entry name" value="YhaI-like_sf"/>
</dbReference>
<dbReference type="Pfam" id="PF08963">
    <property type="entry name" value="DUF1878"/>
    <property type="match status" value="1"/>
</dbReference>
<dbReference type="SUPFAM" id="SSF109915">
    <property type="entry name" value="Hypothetical protein YhaI"/>
    <property type="match status" value="1"/>
</dbReference>
<proteinExistence type="evidence at protein level"/>
<feature type="chain" id="PRO_0000049548" description="Uncharacterized protein YhaI">
    <location>
        <begin position="1"/>
        <end position="113"/>
    </location>
</feature>
<feature type="helix" evidence="1">
    <location>
        <begin position="4"/>
        <end position="19"/>
    </location>
</feature>
<feature type="turn" evidence="1">
    <location>
        <begin position="24"/>
        <end position="26"/>
    </location>
</feature>
<feature type="helix" evidence="1">
    <location>
        <begin position="28"/>
        <end position="35"/>
    </location>
</feature>
<feature type="helix" evidence="1">
    <location>
        <begin position="40"/>
        <end position="62"/>
    </location>
</feature>
<feature type="helix" evidence="1">
    <location>
        <begin position="69"/>
        <end position="78"/>
    </location>
</feature>
<feature type="helix" evidence="1">
    <location>
        <begin position="85"/>
        <end position="94"/>
    </location>
</feature>
<feature type="helix" evidence="1">
    <location>
        <begin position="99"/>
        <end position="112"/>
    </location>
</feature>
<protein>
    <recommendedName>
        <fullName>Uncharacterized protein YhaI</fullName>
    </recommendedName>
</protein>
<reference key="1">
    <citation type="journal article" date="1998" name="Microbiology">
        <title>The 172 kb prkA-addAB region from 83 degrees to 97 degrees of the Bacillus subtilis chromosome contains several dysfunctional genes, the glyB marker, many genes encoding transporter proteins, and the ubiquitous hit gene.</title>
        <authorList>
            <person name="Noback M.A."/>
            <person name="Holsappel S."/>
            <person name="Kiewiet R."/>
            <person name="Terpstra P."/>
            <person name="Wambutt R."/>
            <person name="Wedler H."/>
            <person name="Venema G."/>
            <person name="Bron S."/>
        </authorList>
    </citation>
    <scope>NUCLEOTIDE SEQUENCE [GENOMIC DNA]</scope>
    <source>
        <strain>168</strain>
    </source>
</reference>
<reference key="2">
    <citation type="journal article" date="1997" name="Nature">
        <title>The complete genome sequence of the Gram-positive bacterium Bacillus subtilis.</title>
        <authorList>
            <person name="Kunst F."/>
            <person name="Ogasawara N."/>
            <person name="Moszer I."/>
            <person name="Albertini A.M."/>
            <person name="Alloni G."/>
            <person name="Azevedo V."/>
            <person name="Bertero M.G."/>
            <person name="Bessieres P."/>
            <person name="Bolotin A."/>
            <person name="Borchert S."/>
            <person name="Borriss R."/>
            <person name="Boursier L."/>
            <person name="Brans A."/>
            <person name="Braun M."/>
            <person name="Brignell S.C."/>
            <person name="Bron S."/>
            <person name="Brouillet S."/>
            <person name="Bruschi C.V."/>
            <person name="Caldwell B."/>
            <person name="Capuano V."/>
            <person name="Carter N.M."/>
            <person name="Choi S.-K."/>
            <person name="Codani J.-J."/>
            <person name="Connerton I.F."/>
            <person name="Cummings N.J."/>
            <person name="Daniel R.A."/>
            <person name="Denizot F."/>
            <person name="Devine K.M."/>
            <person name="Duesterhoeft A."/>
            <person name="Ehrlich S.D."/>
            <person name="Emmerson P.T."/>
            <person name="Entian K.-D."/>
            <person name="Errington J."/>
            <person name="Fabret C."/>
            <person name="Ferrari E."/>
            <person name="Foulger D."/>
            <person name="Fritz C."/>
            <person name="Fujita M."/>
            <person name="Fujita Y."/>
            <person name="Fuma S."/>
            <person name="Galizzi A."/>
            <person name="Galleron N."/>
            <person name="Ghim S.-Y."/>
            <person name="Glaser P."/>
            <person name="Goffeau A."/>
            <person name="Golightly E.J."/>
            <person name="Grandi G."/>
            <person name="Guiseppi G."/>
            <person name="Guy B.J."/>
            <person name="Haga K."/>
            <person name="Haiech J."/>
            <person name="Harwood C.R."/>
            <person name="Henaut A."/>
            <person name="Hilbert H."/>
            <person name="Holsappel S."/>
            <person name="Hosono S."/>
            <person name="Hullo M.-F."/>
            <person name="Itaya M."/>
            <person name="Jones L.-M."/>
            <person name="Joris B."/>
            <person name="Karamata D."/>
            <person name="Kasahara Y."/>
            <person name="Klaerr-Blanchard M."/>
            <person name="Klein C."/>
            <person name="Kobayashi Y."/>
            <person name="Koetter P."/>
            <person name="Koningstein G."/>
            <person name="Krogh S."/>
            <person name="Kumano M."/>
            <person name="Kurita K."/>
            <person name="Lapidus A."/>
            <person name="Lardinois S."/>
            <person name="Lauber J."/>
            <person name="Lazarevic V."/>
            <person name="Lee S.-M."/>
            <person name="Levine A."/>
            <person name="Liu H."/>
            <person name="Masuda S."/>
            <person name="Mauel C."/>
            <person name="Medigue C."/>
            <person name="Medina N."/>
            <person name="Mellado R.P."/>
            <person name="Mizuno M."/>
            <person name="Moestl D."/>
            <person name="Nakai S."/>
            <person name="Noback M."/>
            <person name="Noone D."/>
            <person name="O'Reilly M."/>
            <person name="Ogawa K."/>
            <person name="Ogiwara A."/>
            <person name="Oudega B."/>
            <person name="Park S.-H."/>
            <person name="Parro V."/>
            <person name="Pohl T.M."/>
            <person name="Portetelle D."/>
            <person name="Porwollik S."/>
            <person name="Prescott A.M."/>
            <person name="Presecan E."/>
            <person name="Pujic P."/>
            <person name="Purnelle B."/>
            <person name="Rapoport G."/>
            <person name="Rey M."/>
            <person name="Reynolds S."/>
            <person name="Rieger M."/>
            <person name="Rivolta C."/>
            <person name="Rocha E."/>
            <person name="Roche B."/>
            <person name="Rose M."/>
            <person name="Sadaie Y."/>
            <person name="Sato T."/>
            <person name="Scanlan E."/>
            <person name="Schleich S."/>
            <person name="Schroeter R."/>
            <person name="Scoffone F."/>
            <person name="Sekiguchi J."/>
            <person name="Sekowska A."/>
            <person name="Seror S.J."/>
            <person name="Serror P."/>
            <person name="Shin B.-S."/>
            <person name="Soldo B."/>
            <person name="Sorokin A."/>
            <person name="Tacconi E."/>
            <person name="Takagi T."/>
            <person name="Takahashi H."/>
            <person name="Takemaru K."/>
            <person name="Takeuchi M."/>
            <person name="Tamakoshi A."/>
            <person name="Tanaka T."/>
            <person name="Terpstra P."/>
            <person name="Tognoni A."/>
            <person name="Tosato V."/>
            <person name="Uchiyama S."/>
            <person name="Vandenbol M."/>
            <person name="Vannier F."/>
            <person name="Vassarotti A."/>
            <person name="Viari A."/>
            <person name="Wambutt R."/>
            <person name="Wedler E."/>
            <person name="Wedler H."/>
            <person name="Weitzenegger T."/>
            <person name="Winters P."/>
            <person name="Wipat A."/>
            <person name="Yamamoto H."/>
            <person name="Yamane K."/>
            <person name="Yasumoto K."/>
            <person name="Yata K."/>
            <person name="Yoshida K."/>
            <person name="Yoshikawa H.-F."/>
            <person name="Zumstein E."/>
            <person name="Yoshikawa H."/>
            <person name="Danchin A."/>
        </authorList>
    </citation>
    <scope>NUCLEOTIDE SEQUENCE [LARGE SCALE GENOMIC DNA]</scope>
    <source>
        <strain>168</strain>
    </source>
</reference>
<reference key="3">
    <citation type="submission" date="2005-01" db="PDB data bank">
        <title>The crystal structure of the hypothetical protein yhaI, APC1180 from Bacillus subtilis.</title>
        <authorList>
            <consortium name="Midwest center for structural genomics (MCSG)"/>
        </authorList>
    </citation>
    <scope>X-RAY CRYSTALLOGRAPHY (2.1 ANGSTROMS)</scope>
</reference>